<protein>
    <recommendedName>
        <fullName>Adenylyl cyclase-associated protein 1</fullName>
        <shortName>CAP 1</shortName>
    </recommendedName>
</protein>
<evidence type="ECO:0000250" key="1"/>
<evidence type="ECO:0000250" key="2">
    <source>
        <dbReference type="UniProtKB" id="Q01518"/>
    </source>
</evidence>
<evidence type="ECO:0000255" key="3">
    <source>
        <dbReference type="PROSITE-ProRule" id="PRU00659"/>
    </source>
</evidence>
<evidence type="ECO:0000256" key="4">
    <source>
        <dbReference type="SAM" id="MobiDB-lite"/>
    </source>
</evidence>
<evidence type="ECO:0000305" key="5"/>
<evidence type="ECO:0007744" key="6">
    <source>
    </source>
</evidence>
<evidence type="ECO:0007829" key="7">
    <source>
        <dbReference type="PDB" id="6FM2"/>
    </source>
</evidence>
<evidence type="ECO:0007829" key="8">
    <source>
        <dbReference type="PDB" id="6RSW"/>
    </source>
</evidence>
<name>CAP1_MOUSE</name>
<accession>P40124</accession>
<accession>Q8BPT7</accession>
<keyword id="KW-0002">3D-structure</keyword>
<keyword id="KW-0007">Acetylation</keyword>
<keyword id="KW-0009">Actin-binding</keyword>
<keyword id="KW-1003">Cell membrane</keyword>
<keyword id="KW-0903">Direct protein sequencing</keyword>
<keyword id="KW-1017">Isopeptide bond</keyword>
<keyword id="KW-0472">Membrane</keyword>
<keyword id="KW-0488">Methylation</keyword>
<keyword id="KW-0597">Phosphoprotein</keyword>
<keyword id="KW-1185">Reference proteome</keyword>
<keyword id="KW-0832">Ubl conjugation</keyword>
<feature type="initiator methionine" description="Removed" evidence="2">
    <location>
        <position position="1"/>
    </location>
</feature>
<feature type="chain" id="PRO_0000205697" description="Adenylyl cyclase-associated protein 1">
    <location>
        <begin position="2"/>
        <end position="474"/>
    </location>
</feature>
<feature type="domain" description="C-CAP/cofactor C-like" evidence="3">
    <location>
        <begin position="312"/>
        <end position="452"/>
    </location>
</feature>
<feature type="region of interest" description="Disordered" evidence="4">
    <location>
        <begin position="215"/>
        <end position="253"/>
    </location>
</feature>
<feature type="region of interest" description="Disordered" evidence="4">
    <location>
        <begin position="277"/>
        <end position="316"/>
    </location>
</feature>
<feature type="compositionally biased region" description="Low complexity" evidence="4">
    <location>
        <begin position="217"/>
        <end position="227"/>
    </location>
</feature>
<feature type="compositionally biased region" description="Pro residues" evidence="4">
    <location>
        <begin position="228"/>
        <end position="241"/>
    </location>
</feature>
<feature type="compositionally biased region" description="Pro residues" evidence="4">
    <location>
        <begin position="299"/>
        <end position="311"/>
    </location>
</feature>
<feature type="modified residue" description="N-acetylalanine" evidence="2">
    <location>
        <position position="2"/>
    </location>
</feature>
<feature type="modified residue" description="Phosphotyrosine" evidence="6">
    <location>
        <position position="31"/>
    </location>
</feature>
<feature type="modified residue" description="Phosphoserine" evidence="2">
    <location>
        <position position="34"/>
    </location>
</feature>
<feature type="modified residue" description="N6-acetyllysine" evidence="2">
    <location>
        <position position="80"/>
    </location>
</feature>
<feature type="modified residue" description="N6-methyllysine" evidence="2">
    <location>
        <position position="286"/>
    </location>
</feature>
<feature type="modified residue" description="Phosphoserine" evidence="2">
    <location>
        <position position="289"/>
    </location>
</feature>
<feature type="modified residue" description="Phosphoserine" evidence="2">
    <location>
        <position position="294"/>
    </location>
</feature>
<feature type="modified residue" description="Phosphoserine" evidence="2">
    <location>
        <position position="300"/>
    </location>
</feature>
<feature type="modified residue" description="Phosphothreonine" evidence="2">
    <location>
        <position position="306"/>
    </location>
</feature>
<feature type="modified residue" description="Phosphoserine" evidence="2">
    <location>
        <position position="307"/>
    </location>
</feature>
<feature type="modified residue" description="Phosphoserine" evidence="2">
    <location>
        <position position="309"/>
    </location>
</feature>
<feature type="cross-link" description="Glycyl lysine isopeptide (Lys-Gly) (interchain with G-Cter in SUMO1)" evidence="2">
    <location>
        <position position="347"/>
    </location>
</feature>
<feature type="sequence conflict" description="In Ref. 1; AAC37610 and 4; AAH05446/AAH05472." evidence="5" ref="1 4">
    <original>S</original>
    <variation>P</variation>
    <location>
        <position position="242"/>
    </location>
</feature>
<feature type="helix" evidence="8">
    <location>
        <begin position="41"/>
        <end position="51"/>
    </location>
</feature>
<feature type="helix" evidence="8">
    <location>
        <begin position="53"/>
        <end position="64"/>
    </location>
</feature>
<feature type="helix" evidence="8">
    <location>
        <begin position="66"/>
        <end position="90"/>
    </location>
</feature>
<feature type="helix" evidence="8">
    <location>
        <begin position="97"/>
        <end position="119"/>
    </location>
</feature>
<feature type="helix" evidence="8">
    <location>
        <begin position="127"/>
        <end position="134"/>
    </location>
</feature>
<feature type="helix" evidence="8">
    <location>
        <begin position="137"/>
        <end position="144"/>
    </location>
</feature>
<feature type="helix" evidence="8">
    <location>
        <begin position="149"/>
        <end position="171"/>
    </location>
</feature>
<feature type="turn" evidence="8">
    <location>
        <begin position="172"/>
        <end position="174"/>
    </location>
</feature>
<feature type="helix" evidence="8">
    <location>
        <begin position="176"/>
        <end position="199"/>
    </location>
</feature>
<feature type="strand" evidence="7">
    <location>
        <begin position="320"/>
        <end position="324"/>
    </location>
</feature>
<feature type="strand" evidence="7">
    <location>
        <begin position="327"/>
        <end position="332"/>
    </location>
</feature>
<feature type="strand" evidence="7">
    <location>
        <begin position="339"/>
        <end position="341"/>
    </location>
</feature>
<feature type="strand" evidence="7">
    <location>
        <begin position="349"/>
        <end position="354"/>
    </location>
</feature>
<feature type="strand" evidence="7">
    <location>
        <begin position="359"/>
        <end position="367"/>
    </location>
</feature>
<feature type="strand" evidence="7">
    <location>
        <begin position="369"/>
        <end position="373"/>
    </location>
</feature>
<feature type="strand" evidence="7">
    <location>
        <begin position="378"/>
        <end position="392"/>
    </location>
</feature>
<feature type="strand" evidence="7">
    <location>
        <begin position="394"/>
        <end position="402"/>
    </location>
</feature>
<feature type="strand" evidence="7">
    <location>
        <begin position="405"/>
        <end position="411"/>
    </location>
</feature>
<feature type="strand" evidence="7">
    <location>
        <begin position="413"/>
        <end position="418"/>
    </location>
</feature>
<feature type="helix" evidence="7">
    <location>
        <begin position="423"/>
        <end position="425"/>
    </location>
</feature>
<feature type="strand" evidence="7">
    <location>
        <begin position="427"/>
        <end position="432"/>
    </location>
</feature>
<feature type="strand" evidence="7">
    <location>
        <begin position="434"/>
        <end position="441"/>
    </location>
</feature>
<feature type="strand" evidence="7">
    <location>
        <begin position="445"/>
        <end position="451"/>
    </location>
</feature>
<feature type="strand" evidence="7">
    <location>
        <begin position="456"/>
        <end position="460"/>
    </location>
</feature>
<feature type="strand" evidence="7">
    <location>
        <begin position="462"/>
        <end position="469"/>
    </location>
</feature>
<dbReference type="EMBL" id="L12367">
    <property type="protein sequence ID" value="AAC37610.1"/>
    <property type="molecule type" value="mRNA"/>
</dbReference>
<dbReference type="EMBL" id="AK053351">
    <property type="protein sequence ID" value="BAC35357.1"/>
    <property type="molecule type" value="mRNA"/>
</dbReference>
<dbReference type="EMBL" id="AL606906">
    <property type="status" value="NOT_ANNOTATED_CDS"/>
    <property type="molecule type" value="Genomic_DNA"/>
</dbReference>
<dbReference type="EMBL" id="BX545849">
    <property type="status" value="NOT_ANNOTATED_CDS"/>
    <property type="molecule type" value="Genomic_DNA"/>
</dbReference>
<dbReference type="EMBL" id="BC005446">
    <property type="protein sequence ID" value="AAH05446.1"/>
    <property type="molecule type" value="mRNA"/>
</dbReference>
<dbReference type="EMBL" id="BC005472">
    <property type="protein sequence ID" value="AAH05472.1"/>
    <property type="molecule type" value="mRNA"/>
</dbReference>
<dbReference type="CCDS" id="CCDS18604.1"/>
<dbReference type="PIR" id="I49572">
    <property type="entry name" value="I49572"/>
</dbReference>
<dbReference type="RefSeq" id="NP_001287996.1">
    <property type="nucleotide sequence ID" value="NM_001301067.3"/>
</dbReference>
<dbReference type="RefSeq" id="NP_001344964.1">
    <property type="nucleotide sequence ID" value="NM_001358035.2"/>
</dbReference>
<dbReference type="RefSeq" id="NP_001344965.1">
    <property type="nucleotide sequence ID" value="NM_001358036.2"/>
</dbReference>
<dbReference type="RefSeq" id="NP_001417023.1">
    <property type="nucleotide sequence ID" value="NM_001430094.1"/>
</dbReference>
<dbReference type="RefSeq" id="NP_001417024.1">
    <property type="nucleotide sequence ID" value="NM_001430095.1"/>
</dbReference>
<dbReference type="RefSeq" id="NP_001417025.1">
    <property type="nucleotide sequence ID" value="NM_001430096.1"/>
</dbReference>
<dbReference type="RefSeq" id="NP_031624.2">
    <property type="nucleotide sequence ID" value="NM_007598.6"/>
</dbReference>
<dbReference type="RefSeq" id="XP_006502758.1">
    <property type="nucleotide sequence ID" value="XM_006502695.1"/>
</dbReference>
<dbReference type="RefSeq" id="XP_006502760.1">
    <property type="nucleotide sequence ID" value="XM_006502697.3"/>
</dbReference>
<dbReference type="PDB" id="6FM2">
    <property type="method" value="X-ray"/>
    <property type="resolution" value="2.80 A"/>
    <property type="chains" value="B=317-474"/>
</dbReference>
<dbReference type="PDB" id="6RSQ">
    <property type="method" value="X-ray"/>
    <property type="resolution" value="2.37 A"/>
    <property type="chains" value="A/B/C/D=41-216"/>
</dbReference>
<dbReference type="PDB" id="6RSW">
    <property type="method" value="X-ray"/>
    <property type="resolution" value="1.95 A"/>
    <property type="chains" value="C=39-210"/>
</dbReference>
<dbReference type="PDBsum" id="6FM2"/>
<dbReference type="PDBsum" id="6RSQ"/>
<dbReference type="PDBsum" id="6RSW"/>
<dbReference type="SMR" id="P40124"/>
<dbReference type="BioGRID" id="198468">
    <property type="interactions" value="33"/>
</dbReference>
<dbReference type="CORUM" id="P40124"/>
<dbReference type="DIP" id="DIP-49641N"/>
<dbReference type="FunCoup" id="P40124">
    <property type="interactions" value="2182"/>
</dbReference>
<dbReference type="IntAct" id="P40124">
    <property type="interactions" value="7"/>
</dbReference>
<dbReference type="MINT" id="P40124"/>
<dbReference type="STRING" id="10090.ENSMUSP00000101864"/>
<dbReference type="GlyGen" id="P40124">
    <property type="glycosylation" value="3 sites, 2 N-linked glycans (2 sites), 1 O-linked glycan (1 site)"/>
</dbReference>
<dbReference type="iPTMnet" id="P40124"/>
<dbReference type="MetOSite" id="P40124"/>
<dbReference type="PhosphoSitePlus" id="P40124"/>
<dbReference type="SwissPalm" id="P40124"/>
<dbReference type="REPRODUCTION-2DPAGE" id="P40124"/>
<dbReference type="CPTAC" id="non-CPTAC-3773"/>
<dbReference type="jPOST" id="P40124"/>
<dbReference type="PaxDb" id="10090-ENSMUSP00000101862"/>
<dbReference type="PeptideAtlas" id="P40124"/>
<dbReference type="ProteomicsDB" id="281770"/>
<dbReference type="Pumba" id="P40124"/>
<dbReference type="Antibodypedia" id="32000">
    <property type="antibodies" value="215 antibodies from 30 providers"/>
</dbReference>
<dbReference type="DNASU" id="12331"/>
<dbReference type="Ensembl" id="ENSMUST00000069533.12">
    <property type="protein sequence ID" value="ENSMUSP00000068260.6"/>
    <property type="gene ID" value="ENSMUSG00000028656.15"/>
</dbReference>
<dbReference type="Ensembl" id="ENSMUST00000106255.8">
    <property type="protein sequence ID" value="ENSMUSP00000101862.2"/>
    <property type="gene ID" value="ENSMUSG00000028656.15"/>
</dbReference>
<dbReference type="Ensembl" id="ENSMUST00000106257.10">
    <property type="protein sequence ID" value="ENSMUSP00000101864.4"/>
    <property type="gene ID" value="ENSMUSG00000028656.15"/>
</dbReference>
<dbReference type="GeneID" id="12331"/>
<dbReference type="KEGG" id="mmu:12331"/>
<dbReference type="UCSC" id="uc008uok.3">
    <property type="organism name" value="mouse"/>
</dbReference>
<dbReference type="AGR" id="MGI:88262"/>
<dbReference type="CTD" id="10487"/>
<dbReference type="MGI" id="MGI:88262">
    <property type="gene designation" value="Cap1"/>
</dbReference>
<dbReference type="VEuPathDB" id="HostDB:ENSMUSG00000028656"/>
<dbReference type="eggNOG" id="KOG2675">
    <property type="taxonomic scope" value="Eukaryota"/>
</dbReference>
<dbReference type="GeneTree" id="ENSGT00390000017955"/>
<dbReference type="HOGENOM" id="CLU_015780_1_1_1"/>
<dbReference type="InParanoid" id="P40124"/>
<dbReference type="OMA" id="KSQQTHK"/>
<dbReference type="OrthoDB" id="1601at2759"/>
<dbReference type="PhylomeDB" id="P40124"/>
<dbReference type="TreeFam" id="TF313791"/>
<dbReference type="Reactome" id="R-MMU-6798695">
    <property type="pathway name" value="Neutrophil degranulation"/>
</dbReference>
<dbReference type="BioGRID-ORCS" id="12331">
    <property type="hits" value="20 hits in 80 CRISPR screens"/>
</dbReference>
<dbReference type="CD-CODE" id="CE726F99">
    <property type="entry name" value="Postsynaptic density"/>
</dbReference>
<dbReference type="ChiTaRS" id="Cap1">
    <property type="organism name" value="mouse"/>
</dbReference>
<dbReference type="PRO" id="PR:P40124"/>
<dbReference type="Proteomes" id="UP000000589">
    <property type="component" value="Chromosome 4"/>
</dbReference>
<dbReference type="RNAct" id="P40124">
    <property type="molecule type" value="protein"/>
</dbReference>
<dbReference type="Bgee" id="ENSMUSG00000028656">
    <property type="expression patterns" value="Expressed in granulocyte and 247 other cell types or tissues"/>
</dbReference>
<dbReference type="ExpressionAtlas" id="P40124">
    <property type="expression patterns" value="baseline and differential"/>
</dbReference>
<dbReference type="GO" id="GO:0030864">
    <property type="term" value="C:cortical actin cytoskeleton"/>
    <property type="evidence" value="ECO:0000314"/>
    <property type="project" value="MGI"/>
</dbReference>
<dbReference type="GO" id="GO:0005737">
    <property type="term" value="C:cytoplasm"/>
    <property type="evidence" value="ECO:0000314"/>
    <property type="project" value="MGI"/>
</dbReference>
<dbReference type="GO" id="GO:0005829">
    <property type="term" value="C:cytosol"/>
    <property type="evidence" value="ECO:0000304"/>
    <property type="project" value="Reactome"/>
</dbReference>
<dbReference type="GO" id="GO:0005576">
    <property type="term" value="C:extracellular region"/>
    <property type="evidence" value="ECO:0000304"/>
    <property type="project" value="Reactome"/>
</dbReference>
<dbReference type="GO" id="GO:0098978">
    <property type="term" value="C:glutamatergic synapse"/>
    <property type="evidence" value="ECO:0000314"/>
    <property type="project" value="SynGO"/>
</dbReference>
<dbReference type="GO" id="GO:0005886">
    <property type="term" value="C:plasma membrane"/>
    <property type="evidence" value="ECO:0007669"/>
    <property type="project" value="UniProtKB-SubCell"/>
</dbReference>
<dbReference type="GO" id="GO:0098794">
    <property type="term" value="C:postsynapse"/>
    <property type="evidence" value="ECO:0000314"/>
    <property type="project" value="SynGO"/>
</dbReference>
<dbReference type="GO" id="GO:0098793">
    <property type="term" value="C:presynapse"/>
    <property type="evidence" value="ECO:0000314"/>
    <property type="project" value="SynGO"/>
</dbReference>
<dbReference type="GO" id="GO:0003779">
    <property type="term" value="F:actin binding"/>
    <property type="evidence" value="ECO:0007669"/>
    <property type="project" value="UniProtKB-KW"/>
</dbReference>
<dbReference type="GO" id="GO:0030036">
    <property type="term" value="P:actin cytoskeleton organization"/>
    <property type="evidence" value="ECO:0000315"/>
    <property type="project" value="MGI"/>
</dbReference>
<dbReference type="GO" id="GO:0001667">
    <property type="term" value="P:ameboidal-type cell migration"/>
    <property type="evidence" value="ECO:0000315"/>
    <property type="project" value="MGI"/>
</dbReference>
<dbReference type="GO" id="GO:0000902">
    <property type="term" value="P:cell morphogenesis"/>
    <property type="evidence" value="ECO:0000316"/>
    <property type="project" value="MGI"/>
</dbReference>
<dbReference type="GO" id="GO:0098885">
    <property type="term" value="P:modification of postsynaptic actin cytoskeleton"/>
    <property type="evidence" value="ECO:0000314"/>
    <property type="project" value="SynGO"/>
</dbReference>
<dbReference type="GO" id="GO:0006898">
    <property type="term" value="P:receptor-mediated endocytosis"/>
    <property type="evidence" value="ECO:0000315"/>
    <property type="project" value="MGI"/>
</dbReference>
<dbReference type="FunFam" id="1.25.40.330:FF:000001">
    <property type="entry name" value="Adenylyl cyclase-associated protein"/>
    <property type="match status" value="1"/>
</dbReference>
<dbReference type="FunFam" id="2.160.20.70:FF:000001">
    <property type="entry name" value="Adenylyl cyclase-associated protein"/>
    <property type="match status" value="1"/>
</dbReference>
<dbReference type="Gene3D" id="2.160.20.70">
    <property type="match status" value="1"/>
</dbReference>
<dbReference type="Gene3D" id="1.25.40.330">
    <property type="entry name" value="Adenylate cyclase-associated CAP, N-terminal domain"/>
    <property type="match status" value="1"/>
</dbReference>
<dbReference type="InterPro" id="IPR001837">
    <property type="entry name" value="Adenylate_cyclase-assoc_CAP"/>
</dbReference>
<dbReference type="InterPro" id="IPR013912">
    <property type="entry name" value="Adenylate_cyclase-assoc_CAP_C"/>
</dbReference>
<dbReference type="InterPro" id="IPR013992">
    <property type="entry name" value="Adenylate_cyclase-assoc_CAP_N"/>
</dbReference>
<dbReference type="InterPro" id="IPR017901">
    <property type="entry name" value="C-CAP_CF_C-like"/>
</dbReference>
<dbReference type="InterPro" id="IPR016098">
    <property type="entry name" value="CAP/MinC_C"/>
</dbReference>
<dbReference type="InterPro" id="IPR036223">
    <property type="entry name" value="CAP_C_sf"/>
</dbReference>
<dbReference type="InterPro" id="IPR028417">
    <property type="entry name" value="CAP_CS_C"/>
</dbReference>
<dbReference type="InterPro" id="IPR018106">
    <property type="entry name" value="CAP_CS_N"/>
</dbReference>
<dbReference type="InterPro" id="IPR053950">
    <property type="entry name" value="CAP_N"/>
</dbReference>
<dbReference type="InterPro" id="IPR036222">
    <property type="entry name" value="CAP_N_sf"/>
</dbReference>
<dbReference type="InterPro" id="IPR006599">
    <property type="entry name" value="CARP_motif"/>
</dbReference>
<dbReference type="PANTHER" id="PTHR10652">
    <property type="entry name" value="ADENYLYL CYCLASE-ASSOCIATED PROTEIN"/>
    <property type="match status" value="1"/>
</dbReference>
<dbReference type="PANTHER" id="PTHR10652:SF1">
    <property type="entry name" value="ADENYLYL CYCLASE-ASSOCIATED PROTEIN 1"/>
    <property type="match status" value="1"/>
</dbReference>
<dbReference type="Pfam" id="PF08603">
    <property type="entry name" value="CAP_C"/>
    <property type="match status" value="1"/>
</dbReference>
<dbReference type="Pfam" id="PF21938">
    <property type="entry name" value="CAP_N"/>
    <property type="match status" value="1"/>
</dbReference>
<dbReference type="Pfam" id="PF01213">
    <property type="entry name" value="CAP_N-CM"/>
    <property type="match status" value="1"/>
</dbReference>
<dbReference type="SMART" id="SM00673">
    <property type="entry name" value="CARP"/>
    <property type="match status" value="2"/>
</dbReference>
<dbReference type="SUPFAM" id="SSF69340">
    <property type="entry name" value="C-terminal domain of adenylylcyclase associated protein"/>
    <property type="match status" value="1"/>
</dbReference>
<dbReference type="SUPFAM" id="SSF101278">
    <property type="entry name" value="N-terminal domain of adenylylcyclase associated protein, CAP"/>
    <property type="match status" value="1"/>
</dbReference>
<dbReference type="PROSITE" id="PS51329">
    <property type="entry name" value="C_CAP_COFACTOR_C"/>
    <property type="match status" value="1"/>
</dbReference>
<dbReference type="PROSITE" id="PS01088">
    <property type="entry name" value="CAP_1"/>
    <property type="match status" value="1"/>
</dbReference>
<dbReference type="PROSITE" id="PS01089">
    <property type="entry name" value="CAP_2"/>
    <property type="match status" value="1"/>
</dbReference>
<sequence length="474" mass="51565">MADMQNLVERLERAVGRLEAVSHTSDMHCGYGDSPSKGAVPYVQAFDSLLANPVAEYLKMSKEIGGDVQKHAEMVHTGLKLERALLATASQCQQPAGNKLSDLLAPISEQIQEVITFREKNRGSKFFNHLSAVSESIQALGWVALAAKPGPFVKEMNDAAMFYTNRVLKEYRDVDKKHVDWVRAYLSIWTELQAYIKEFHTTGLAWSKTGPVAKELSGLPSGPSVGSGPPPPPPGPPPPPISTSSGSDDSASRSALFAQINQGESITHALKHVSDDMKTHKNPALKAQSGPVRSGPKPFSAPKPQTSPSPKPATKKEPALLELEGKKWRVENQENVSNLVIDDTELKQVAYIYKCVNTTLQIKGKINSITVDNCKKLGLVFDDVVGIVEIINSRDVKVQVMGKVPTISINKTDGCHAYLSKNSLDCEIVSAKSSEMNVLIPTEGGDFNEFPVPEQFKTLWNGQKLVTTVTEIAG</sequence>
<proteinExistence type="evidence at protein level"/>
<comment type="function">
    <text evidence="1">Directly regulates filament dynamics and has been implicated in a number of complex developmental and morphological processes, including mRNA localization and the establishment of cell polarity.</text>
</comment>
<comment type="subunit">
    <text evidence="1">Homodimer. Binds actin monomers (By similarity).</text>
</comment>
<comment type="interaction">
    <interactant intactId="EBI-641927">
        <id>P40124</id>
    </interactant>
    <interactant intactId="EBI-641874">
        <id>Q99N72</id>
        <label>Mcf2</label>
    </interactant>
    <organismsDiffer>false</organismsDiffer>
    <experiments>3</experiments>
</comment>
<comment type="subcellular location">
    <subcellularLocation>
        <location evidence="1">Cell membrane</location>
        <topology evidence="1">Peripheral membrane protein</topology>
    </subcellularLocation>
</comment>
<comment type="tissue specificity">
    <text>Ubiquitous.</text>
</comment>
<comment type="similarity">
    <text evidence="5">Belongs to the CAP family.</text>
</comment>
<organism>
    <name type="scientific">Mus musculus</name>
    <name type="common">Mouse</name>
    <dbReference type="NCBI Taxonomy" id="10090"/>
    <lineage>
        <taxon>Eukaryota</taxon>
        <taxon>Metazoa</taxon>
        <taxon>Chordata</taxon>
        <taxon>Craniata</taxon>
        <taxon>Vertebrata</taxon>
        <taxon>Euteleostomi</taxon>
        <taxon>Mammalia</taxon>
        <taxon>Eutheria</taxon>
        <taxon>Euarchontoglires</taxon>
        <taxon>Glires</taxon>
        <taxon>Rodentia</taxon>
        <taxon>Myomorpha</taxon>
        <taxon>Muroidea</taxon>
        <taxon>Muridae</taxon>
        <taxon>Murinae</taxon>
        <taxon>Mus</taxon>
        <taxon>Mus</taxon>
    </lineage>
</organism>
<reference key="1">
    <citation type="journal article" date="1993" name="J. Cell Sci.">
        <title>Identification and characterization of a cDNA encoding mouse CAP: a homolog of the yeast adenylyl cyclase associated protein.</title>
        <authorList>
            <person name="Vojtek A.B."/>
            <person name="Cooper J.A."/>
        </authorList>
    </citation>
    <scope>NUCLEOTIDE SEQUENCE [MRNA]</scope>
</reference>
<reference key="2">
    <citation type="journal article" date="2005" name="Science">
        <title>The transcriptional landscape of the mammalian genome.</title>
        <authorList>
            <person name="Carninci P."/>
            <person name="Kasukawa T."/>
            <person name="Katayama S."/>
            <person name="Gough J."/>
            <person name="Frith M.C."/>
            <person name="Maeda N."/>
            <person name="Oyama R."/>
            <person name="Ravasi T."/>
            <person name="Lenhard B."/>
            <person name="Wells C."/>
            <person name="Kodzius R."/>
            <person name="Shimokawa K."/>
            <person name="Bajic V.B."/>
            <person name="Brenner S.E."/>
            <person name="Batalov S."/>
            <person name="Forrest A.R."/>
            <person name="Zavolan M."/>
            <person name="Davis M.J."/>
            <person name="Wilming L.G."/>
            <person name="Aidinis V."/>
            <person name="Allen J.E."/>
            <person name="Ambesi-Impiombato A."/>
            <person name="Apweiler R."/>
            <person name="Aturaliya R.N."/>
            <person name="Bailey T.L."/>
            <person name="Bansal M."/>
            <person name="Baxter L."/>
            <person name="Beisel K.W."/>
            <person name="Bersano T."/>
            <person name="Bono H."/>
            <person name="Chalk A.M."/>
            <person name="Chiu K.P."/>
            <person name="Choudhary V."/>
            <person name="Christoffels A."/>
            <person name="Clutterbuck D.R."/>
            <person name="Crowe M.L."/>
            <person name="Dalla E."/>
            <person name="Dalrymple B.P."/>
            <person name="de Bono B."/>
            <person name="Della Gatta G."/>
            <person name="di Bernardo D."/>
            <person name="Down T."/>
            <person name="Engstrom P."/>
            <person name="Fagiolini M."/>
            <person name="Faulkner G."/>
            <person name="Fletcher C.F."/>
            <person name="Fukushima T."/>
            <person name="Furuno M."/>
            <person name="Futaki S."/>
            <person name="Gariboldi M."/>
            <person name="Georgii-Hemming P."/>
            <person name="Gingeras T.R."/>
            <person name="Gojobori T."/>
            <person name="Green R.E."/>
            <person name="Gustincich S."/>
            <person name="Harbers M."/>
            <person name="Hayashi Y."/>
            <person name="Hensch T.K."/>
            <person name="Hirokawa N."/>
            <person name="Hill D."/>
            <person name="Huminiecki L."/>
            <person name="Iacono M."/>
            <person name="Ikeo K."/>
            <person name="Iwama A."/>
            <person name="Ishikawa T."/>
            <person name="Jakt M."/>
            <person name="Kanapin A."/>
            <person name="Katoh M."/>
            <person name="Kawasawa Y."/>
            <person name="Kelso J."/>
            <person name="Kitamura H."/>
            <person name="Kitano H."/>
            <person name="Kollias G."/>
            <person name="Krishnan S.P."/>
            <person name="Kruger A."/>
            <person name="Kummerfeld S.K."/>
            <person name="Kurochkin I.V."/>
            <person name="Lareau L.F."/>
            <person name="Lazarevic D."/>
            <person name="Lipovich L."/>
            <person name="Liu J."/>
            <person name="Liuni S."/>
            <person name="McWilliam S."/>
            <person name="Madan Babu M."/>
            <person name="Madera M."/>
            <person name="Marchionni L."/>
            <person name="Matsuda H."/>
            <person name="Matsuzawa S."/>
            <person name="Miki H."/>
            <person name="Mignone F."/>
            <person name="Miyake S."/>
            <person name="Morris K."/>
            <person name="Mottagui-Tabar S."/>
            <person name="Mulder N."/>
            <person name="Nakano N."/>
            <person name="Nakauchi H."/>
            <person name="Ng P."/>
            <person name="Nilsson R."/>
            <person name="Nishiguchi S."/>
            <person name="Nishikawa S."/>
            <person name="Nori F."/>
            <person name="Ohara O."/>
            <person name="Okazaki Y."/>
            <person name="Orlando V."/>
            <person name="Pang K.C."/>
            <person name="Pavan W.J."/>
            <person name="Pavesi G."/>
            <person name="Pesole G."/>
            <person name="Petrovsky N."/>
            <person name="Piazza S."/>
            <person name="Reed J."/>
            <person name="Reid J.F."/>
            <person name="Ring B.Z."/>
            <person name="Ringwald M."/>
            <person name="Rost B."/>
            <person name="Ruan Y."/>
            <person name="Salzberg S.L."/>
            <person name="Sandelin A."/>
            <person name="Schneider C."/>
            <person name="Schoenbach C."/>
            <person name="Sekiguchi K."/>
            <person name="Semple C.A."/>
            <person name="Seno S."/>
            <person name="Sessa L."/>
            <person name="Sheng Y."/>
            <person name="Shibata Y."/>
            <person name="Shimada H."/>
            <person name="Shimada K."/>
            <person name="Silva D."/>
            <person name="Sinclair B."/>
            <person name="Sperling S."/>
            <person name="Stupka E."/>
            <person name="Sugiura K."/>
            <person name="Sultana R."/>
            <person name="Takenaka Y."/>
            <person name="Taki K."/>
            <person name="Tammoja K."/>
            <person name="Tan S.L."/>
            <person name="Tang S."/>
            <person name="Taylor M.S."/>
            <person name="Tegner J."/>
            <person name="Teichmann S.A."/>
            <person name="Ueda H.R."/>
            <person name="van Nimwegen E."/>
            <person name="Verardo R."/>
            <person name="Wei C.L."/>
            <person name="Yagi K."/>
            <person name="Yamanishi H."/>
            <person name="Zabarovsky E."/>
            <person name="Zhu S."/>
            <person name="Zimmer A."/>
            <person name="Hide W."/>
            <person name="Bult C."/>
            <person name="Grimmond S.M."/>
            <person name="Teasdale R.D."/>
            <person name="Liu E.T."/>
            <person name="Brusic V."/>
            <person name="Quackenbush J."/>
            <person name="Wahlestedt C."/>
            <person name="Mattick J.S."/>
            <person name="Hume D.A."/>
            <person name="Kai C."/>
            <person name="Sasaki D."/>
            <person name="Tomaru Y."/>
            <person name="Fukuda S."/>
            <person name="Kanamori-Katayama M."/>
            <person name="Suzuki M."/>
            <person name="Aoki J."/>
            <person name="Arakawa T."/>
            <person name="Iida J."/>
            <person name="Imamura K."/>
            <person name="Itoh M."/>
            <person name="Kato T."/>
            <person name="Kawaji H."/>
            <person name="Kawagashira N."/>
            <person name="Kawashima T."/>
            <person name="Kojima M."/>
            <person name="Kondo S."/>
            <person name="Konno H."/>
            <person name="Nakano K."/>
            <person name="Ninomiya N."/>
            <person name="Nishio T."/>
            <person name="Okada M."/>
            <person name="Plessy C."/>
            <person name="Shibata K."/>
            <person name="Shiraki T."/>
            <person name="Suzuki S."/>
            <person name="Tagami M."/>
            <person name="Waki K."/>
            <person name="Watahiki A."/>
            <person name="Okamura-Oho Y."/>
            <person name="Suzuki H."/>
            <person name="Kawai J."/>
            <person name="Hayashizaki Y."/>
        </authorList>
    </citation>
    <scope>NUCLEOTIDE SEQUENCE [LARGE SCALE MRNA]</scope>
    <source>
        <strain>C57BL/6J</strain>
        <tissue>Eye</tissue>
    </source>
</reference>
<reference key="3">
    <citation type="journal article" date="2009" name="PLoS Biol.">
        <title>Lineage-specific biology revealed by a finished genome assembly of the mouse.</title>
        <authorList>
            <person name="Church D.M."/>
            <person name="Goodstadt L."/>
            <person name="Hillier L.W."/>
            <person name="Zody M.C."/>
            <person name="Goldstein S."/>
            <person name="She X."/>
            <person name="Bult C.J."/>
            <person name="Agarwala R."/>
            <person name="Cherry J.L."/>
            <person name="DiCuccio M."/>
            <person name="Hlavina W."/>
            <person name="Kapustin Y."/>
            <person name="Meric P."/>
            <person name="Maglott D."/>
            <person name="Birtle Z."/>
            <person name="Marques A.C."/>
            <person name="Graves T."/>
            <person name="Zhou S."/>
            <person name="Teague B."/>
            <person name="Potamousis K."/>
            <person name="Churas C."/>
            <person name="Place M."/>
            <person name="Herschleb J."/>
            <person name="Runnheim R."/>
            <person name="Forrest D."/>
            <person name="Amos-Landgraf J."/>
            <person name="Schwartz D.C."/>
            <person name="Cheng Z."/>
            <person name="Lindblad-Toh K."/>
            <person name="Eichler E.E."/>
            <person name="Ponting C.P."/>
        </authorList>
    </citation>
    <scope>NUCLEOTIDE SEQUENCE [LARGE SCALE GENOMIC DNA]</scope>
    <source>
        <strain>C57BL/6J</strain>
    </source>
</reference>
<reference key="4">
    <citation type="journal article" date="2004" name="Genome Res.">
        <title>The status, quality, and expansion of the NIH full-length cDNA project: the Mammalian Gene Collection (MGC).</title>
        <authorList>
            <consortium name="The MGC Project Team"/>
        </authorList>
    </citation>
    <scope>NUCLEOTIDE SEQUENCE [LARGE SCALE MRNA]</scope>
    <source>
        <strain>Czech II</strain>
        <tissue>Mammary gland</tissue>
    </source>
</reference>
<reference key="5">
    <citation type="submission" date="2009-01" db="UniProtKB">
        <authorList>
            <person name="Lubec G."/>
            <person name="Sunyer B."/>
            <person name="Chen W.-Q."/>
        </authorList>
    </citation>
    <scope>PROTEIN SEQUENCE OF 254-271</scope>
    <scope>IDENTIFICATION BY MASS SPECTROMETRY</scope>
    <source>
        <strain>OF1</strain>
        <tissue>Hippocampus</tissue>
    </source>
</reference>
<reference key="6">
    <citation type="journal article" date="2005" name="Nat. Biotechnol.">
        <title>Immunoaffinity profiling of tyrosine phosphorylation in cancer cells.</title>
        <authorList>
            <person name="Rush J."/>
            <person name="Moritz A."/>
            <person name="Lee K.A."/>
            <person name="Guo A."/>
            <person name="Goss V.L."/>
            <person name="Spek E.J."/>
            <person name="Zhang H."/>
            <person name="Zha X.-M."/>
            <person name="Polakiewicz R.D."/>
            <person name="Comb M.J."/>
        </authorList>
    </citation>
    <scope>PHOSPHORYLATION [LARGE SCALE ANALYSIS] AT TYR-31</scope>
    <scope>IDENTIFICATION BY MASS SPECTROMETRY [LARGE SCALE ANALYSIS]</scope>
</reference>
<reference key="7">
    <citation type="journal article" date="2010" name="Cell">
        <title>A tissue-specific atlas of mouse protein phosphorylation and expression.</title>
        <authorList>
            <person name="Huttlin E.L."/>
            <person name="Jedrychowski M.P."/>
            <person name="Elias J.E."/>
            <person name="Goswami T."/>
            <person name="Rad R."/>
            <person name="Beausoleil S.A."/>
            <person name="Villen J."/>
            <person name="Haas W."/>
            <person name="Sowa M.E."/>
            <person name="Gygi S.P."/>
        </authorList>
    </citation>
    <scope>IDENTIFICATION BY MASS SPECTROMETRY [LARGE SCALE ANALYSIS]</scope>
    <source>
        <tissue>Brain</tissue>
        <tissue>Brown adipose tissue</tissue>
        <tissue>Heart</tissue>
        <tissue>Kidney</tissue>
        <tissue>Liver</tissue>
        <tissue>Lung</tissue>
        <tissue>Pancreas</tissue>
        <tissue>Spleen</tissue>
        <tissue>Testis</tissue>
    </source>
</reference>
<gene>
    <name type="primary">Cap1</name>
    <name type="synonym">Cap</name>
</gene>